<name>ROC2_NICPL</name>
<protein>
    <recommendedName>
        <fullName>31 kDa ribonucleoprotein, chloroplastic</fullName>
    </recommendedName>
    <alternativeName>
        <fullName>CP-RBP31</fullName>
    </alternativeName>
</protein>
<dbReference type="EMBL" id="X65117">
    <property type="protein sequence ID" value="CAA46233.1"/>
    <property type="molecule type" value="mRNA"/>
</dbReference>
<dbReference type="PIR" id="S26204">
    <property type="entry name" value="S26204"/>
</dbReference>
<dbReference type="SMR" id="P49314"/>
<dbReference type="GO" id="GO:0009535">
    <property type="term" value="C:chloroplast thylakoid membrane"/>
    <property type="evidence" value="ECO:0007669"/>
    <property type="project" value="TreeGrafter"/>
</dbReference>
<dbReference type="GO" id="GO:1990904">
    <property type="term" value="C:ribonucleoprotein complex"/>
    <property type="evidence" value="ECO:0007669"/>
    <property type="project" value="UniProtKB-KW"/>
</dbReference>
<dbReference type="GO" id="GO:0003729">
    <property type="term" value="F:mRNA binding"/>
    <property type="evidence" value="ECO:0007669"/>
    <property type="project" value="TreeGrafter"/>
</dbReference>
<dbReference type="GO" id="GO:1901259">
    <property type="term" value="P:chloroplast rRNA processing"/>
    <property type="evidence" value="ECO:0007669"/>
    <property type="project" value="TreeGrafter"/>
</dbReference>
<dbReference type="GO" id="GO:0006397">
    <property type="term" value="P:mRNA processing"/>
    <property type="evidence" value="ECO:0007669"/>
    <property type="project" value="UniProtKB-KW"/>
</dbReference>
<dbReference type="CDD" id="cd21608">
    <property type="entry name" value="RRM2_NsCP33_like"/>
    <property type="match status" value="1"/>
</dbReference>
<dbReference type="FunFam" id="3.30.70.330:FF:000361">
    <property type="entry name" value="28 kDa ribonucleoprotein, chloroplastic"/>
    <property type="match status" value="1"/>
</dbReference>
<dbReference type="Gene3D" id="3.30.70.330">
    <property type="match status" value="2"/>
</dbReference>
<dbReference type="InterPro" id="IPR050502">
    <property type="entry name" value="Euk_RNA-bind_prot"/>
</dbReference>
<dbReference type="InterPro" id="IPR012677">
    <property type="entry name" value="Nucleotide-bd_a/b_plait_sf"/>
</dbReference>
<dbReference type="InterPro" id="IPR035979">
    <property type="entry name" value="RBD_domain_sf"/>
</dbReference>
<dbReference type="InterPro" id="IPR048289">
    <property type="entry name" value="RRM2_NsCP33-like"/>
</dbReference>
<dbReference type="InterPro" id="IPR000504">
    <property type="entry name" value="RRM_dom"/>
</dbReference>
<dbReference type="PANTHER" id="PTHR48025">
    <property type="entry name" value="OS02G0815200 PROTEIN"/>
    <property type="match status" value="1"/>
</dbReference>
<dbReference type="PANTHER" id="PTHR48025:SF1">
    <property type="entry name" value="RRM DOMAIN-CONTAINING PROTEIN"/>
    <property type="match status" value="1"/>
</dbReference>
<dbReference type="Pfam" id="PF00076">
    <property type="entry name" value="RRM_1"/>
    <property type="match status" value="2"/>
</dbReference>
<dbReference type="SMART" id="SM00360">
    <property type="entry name" value="RRM"/>
    <property type="match status" value="2"/>
</dbReference>
<dbReference type="SUPFAM" id="SSF54928">
    <property type="entry name" value="RNA-binding domain, RBD"/>
    <property type="match status" value="2"/>
</dbReference>
<dbReference type="PROSITE" id="PS50102">
    <property type="entry name" value="RRM"/>
    <property type="match status" value="2"/>
</dbReference>
<evidence type="ECO:0000255" key="1"/>
<evidence type="ECO:0000255" key="2">
    <source>
        <dbReference type="PROSITE-ProRule" id="PRU00176"/>
    </source>
</evidence>
<evidence type="ECO:0000256" key="3">
    <source>
        <dbReference type="SAM" id="MobiDB-lite"/>
    </source>
</evidence>
<accession>P49314</accession>
<organism>
    <name type="scientific">Nicotiana plumbaginifolia</name>
    <name type="common">Leadwort-leaved tobacco</name>
    <name type="synonym">Tex-Mex tobacco</name>
    <dbReference type="NCBI Taxonomy" id="4092"/>
    <lineage>
        <taxon>Eukaryota</taxon>
        <taxon>Viridiplantae</taxon>
        <taxon>Streptophyta</taxon>
        <taxon>Embryophyta</taxon>
        <taxon>Tracheophyta</taxon>
        <taxon>Spermatophyta</taxon>
        <taxon>Magnoliopsida</taxon>
        <taxon>eudicotyledons</taxon>
        <taxon>Gunneridae</taxon>
        <taxon>Pentapetalae</taxon>
        <taxon>asterids</taxon>
        <taxon>lamiids</taxon>
        <taxon>Solanales</taxon>
        <taxon>Solanaceae</taxon>
        <taxon>Nicotianoideae</taxon>
        <taxon>Nicotianeae</taxon>
        <taxon>Nicotiana</taxon>
    </lineage>
</organism>
<feature type="transit peptide" description="Chloroplast" evidence="1">
    <location>
        <begin position="1"/>
        <end status="unknown"/>
    </location>
</feature>
<feature type="chain" id="PRO_0000031026" description="31 kDa ribonucleoprotein, chloroplastic">
    <location>
        <begin status="unknown"/>
        <end position="292"/>
    </location>
</feature>
<feature type="domain" description="RRM 1" evidence="2">
    <location>
        <begin position="88"/>
        <end position="166"/>
    </location>
</feature>
<feature type="domain" description="RRM 2" evidence="2">
    <location>
        <begin position="208"/>
        <end position="286"/>
    </location>
</feature>
<feature type="region of interest" description="Disordered" evidence="3">
    <location>
        <begin position="165"/>
        <end position="203"/>
    </location>
</feature>
<feature type="region of interest" description="Linker (Gly-rich)">
    <location>
        <begin position="167"/>
        <end position="207"/>
    </location>
</feature>
<feature type="compositionally biased region" description="Gly residues" evidence="3">
    <location>
        <begin position="175"/>
        <end position="190"/>
    </location>
</feature>
<keyword id="KW-0150">Chloroplast</keyword>
<keyword id="KW-0507">mRNA processing</keyword>
<keyword id="KW-0934">Plastid</keyword>
<keyword id="KW-0677">Repeat</keyword>
<keyword id="KW-0687">Ribonucleoprotein</keyword>
<keyword id="KW-0694">RNA-binding</keyword>
<keyword id="KW-0809">Transit peptide</keyword>
<proteinExistence type="evidence at transcript level"/>
<sequence>MASSSVSSLQFLFVTSQTPSSLKPNSTLSFFSLPSSSLNLSLSSSSIGHSASIKPFESSFSTRVALSDFDQLEDDVEVAEQPRFSEDLKLFVGNLPFSVDSAALAGLFERAGNVEIVEVIYDKLSGRSRGFGFVTMSTKEEVEAAEQQFNGYEIDGRAIRVNAGPAPAKRENSSFGGGRGGNSSYGGGRDGNSSFGGARGGRSVDSSNRVYVGNLSWGVDDLALKELFSEQGNVVDAKVVYDRDSGRSRGFGFVTYSSAKEVNDAIDSLNGIDLDGRSIRVSAAEERPRRQF</sequence>
<comment type="subcellular location">
    <subcellularLocation>
        <location>Plastid</location>
        <location>Chloroplast</location>
    </subcellularLocation>
</comment>
<comment type="tissue specificity">
    <text>Expressed at high levels in the leaves and seedlings, and lower levels are seen in the stems and roots.</text>
</comment>
<reference key="1">
    <citation type="journal article" date="1992" name="Mol. Gen. Genet.">
        <title>Multiple plant RNA binding proteins identified by PCR: expression of cDNAs encoding RNA binding proteins targeted to chloroplasts in Nicotiana plumbaginifolia.</title>
        <authorList>
            <person name="Mieszczak M."/>
            <person name="Klahre U."/>
            <person name="Levy J.H."/>
            <person name="Goodall G.J."/>
            <person name="Filipowicz W."/>
        </authorList>
    </citation>
    <scope>NUCLEOTIDE SEQUENCE [MRNA]</scope>
    <source>
        <tissue>Leaf</tissue>
    </source>
</reference>